<keyword id="KW-0418">Kinase</keyword>
<keyword id="KW-0547">Nucleotide-binding</keyword>
<keyword id="KW-0723">Serine/threonine-protein kinase</keyword>
<keyword id="KW-0808">Transferase</keyword>
<organism>
    <name type="scientific">Rickettsia rickettsii (strain Iowa)</name>
    <dbReference type="NCBI Taxonomy" id="452659"/>
    <lineage>
        <taxon>Bacteria</taxon>
        <taxon>Pseudomonadati</taxon>
        <taxon>Pseudomonadota</taxon>
        <taxon>Alphaproteobacteria</taxon>
        <taxon>Rickettsiales</taxon>
        <taxon>Rickettsiaceae</taxon>
        <taxon>Rickettsieae</taxon>
        <taxon>Rickettsia</taxon>
        <taxon>spotted fever group</taxon>
    </lineage>
</organism>
<name>PDRP_RICRO</name>
<dbReference type="EC" id="2.7.11.32" evidence="1"/>
<dbReference type="EC" id="2.7.4.27" evidence="1"/>
<dbReference type="EMBL" id="CP000766">
    <property type="protein sequence ID" value="ABY71933.1"/>
    <property type="molecule type" value="Genomic_DNA"/>
</dbReference>
<dbReference type="RefSeq" id="WP_012150225.1">
    <property type="nucleotide sequence ID" value="NC_010263.3"/>
</dbReference>
<dbReference type="SMR" id="B0BVQ7"/>
<dbReference type="KEGG" id="rrj:RrIowa_0001"/>
<dbReference type="eggNOG" id="COG1806">
    <property type="taxonomic scope" value="Bacteria"/>
</dbReference>
<dbReference type="HOGENOM" id="CLU_046206_2_0_5"/>
<dbReference type="Proteomes" id="UP000000796">
    <property type="component" value="Chromosome"/>
</dbReference>
<dbReference type="GO" id="GO:0043531">
    <property type="term" value="F:ADP binding"/>
    <property type="evidence" value="ECO:0007669"/>
    <property type="project" value="UniProtKB-UniRule"/>
</dbReference>
<dbReference type="GO" id="GO:0005524">
    <property type="term" value="F:ATP binding"/>
    <property type="evidence" value="ECO:0007669"/>
    <property type="project" value="InterPro"/>
</dbReference>
<dbReference type="GO" id="GO:0016776">
    <property type="term" value="F:phosphotransferase activity, phosphate group as acceptor"/>
    <property type="evidence" value="ECO:0007669"/>
    <property type="project" value="UniProtKB-UniRule"/>
</dbReference>
<dbReference type="GO" id="GO:0004674">
    <property type="term" value="F:protein serine/threonine kinase activity"/>
    <property type="evidence" value="ECO:0007669"/>
    <property type="project" value="UniProtKB-UniRule"/>
</dbReference>
<dbReference type="HAMAP" id="MF_00921">
    <property type="entry name" value="PDRP"/>
    <property type="match status" value="1"/>
</dbReference>
<dbReference type="InterPro" id="IPR005177">
    <property type="entry name" value="Kinase-pyrophosphorylase"/>
</dbReference>
<dbReference type="InterPro" id="IPR026565">
    <property type="entry name" value="PPDK_reg"/>
</dbReference>
<dbReference type="NCBIfam" id="NF003742">
    <property type="entry name" value="PRK05339.1"/>
    <property type="match status" value="1"/>
</dbReference>
<dbReference type="PANTHER" id="PTHR31756">
    <property type="entry name" value="PYRUVATE, PHOSPHATE DIKINASE REGULATORY PROTEIN 1, CHLOROPLASTIC"/>
    <property type="match status" value="1"/>
</dbReference>
<dbReference type="PANTHER" id="PTHR31756:SF3">
    <property type="entry name" value="PYRUVATE, PHOSPHATE DIKINASE REGULATORY PROTEIN 1, CHLOROPLASTIC"/>
    <property type="match status" value="1"/>
</dbReference>
<dbReference type="Pfam" id="PF03618">
    <property type="entry name" value="Kinase-PPPase"/>
    <property type="match status" value="1"/>
</dbReference>
<protein>
    <recommendedName>
        <fullName evidence="1">Putative pyruvate, phosphate dikinase regulatory protein</fullName>
        <shortName evidence="1">PPDK regulatory protein</shortName>
        <ecNumber evidence="1">2.7.11.32</ecNumber>
        <ecNumber evidence="1">2.7.4.27</ecNumber>
    </recommendedName>
</protein>
<accession>B0BVQ7</accession>
<proteinExistence type="inferred from homology"/>
<gene>
    <name type="ordered locus">RrIowa_0001</name>
</gene>
<sequence>MTKLIIHLVSDSSVQTAKYAANSALAQFTSVKPKLYHWPMIRNLELLNEVLSKIEYKHGIVLYTIADQELRKTLTKFCYELKIPCISVIGKIIKEMSVFSGIEIEKEQNYNYKFDKTYFDTLNAIDYAIRHDDGQMLNELSEADIILIGPSRTSKTPTSVFLAYNGLKAANIPYVYNCPFPDFIEKDIDQLVVGLVINPNRLIEIREARLNLLQINENKSYTDFNIVQKECLEVRKICDQRNWPVIDVSTRSIEETAALIMRIYYNRKNKYNK</sequence>
<comment type="function">
    <text evidence="1">Bifunctional serine/threonine kinase and phosphorylase involved in the regulation of the pyruvate, phosphate dikinase (PPDK) by catalyzing its phosphorylation/dephosphorylation.</text>
</comment>
<comment type="catalytic activity">
    <reaction evidence="1">
        <text>N(tele)-phospho-L-histidyl/L-threonyl-[pyruvate, phosphate dikinase] + ADP = N(tele)-phospho-L-histidyl/O-phospho-L-threonyl-[pyruvate, phosphate dikinase] + AMP + H(+)</text>
        <dbReference type="Rhea" id="RHEA:43692"/>
        <dbReference type="Rhea" id="RHEA-COMP:10650"/>
        <dbReference type="Rhea" id="RHEA-COMP:10651"/>
        <dbReference type="ChEBI" id="CHEBI:15378"/>
        <dbReference type="ChEBI" id="CHEBI:30013"/>
        <dbReference type="ChEBI" id="CHEBI:61977"/>
        <dbReference type="ChEBI" id="CHEBI:83586"/>
        <dbReference type="ChEBI" id="CHEBI:456215"/>
        <dbReference type="ChEBI" id="CHEBI:456216"/>
        <dbReference type="EC" id="2.7.11.32"/>
    </reaction>
</comment>
<comment type="catalytic activity">
    <reaction evidence="1">
        <text>N(tele)-phospho-L-histidyl/O-phospho-L-threonyl-[pyruvate, phosphate dikinase] + phosphate + H(+) = N(tele)-phospho-L-histidyl/L-threonyl-[pyruvate, phosphate dikinase] + diphosphate</text>
        <dbReference type="Rhea" id="RHEA:43696"/>
        <dbReference type="Rhea" id="RHEA-COMP:10650"/>
        <dbReference type="Rhea" id="RHEA-COMP:10651"/>
        <dbReference type="ChEBI" id="CHEBI:15378"/>
        <dbReference type="ChEBI" id="CHEBI:30013"/>
        <dbReference type="ChEBI" id="CHEBI:33019"/>
        <dbReference type="ChEBI" id="CHEBI:43474"/>
        <dbReference type="ChEBI" id="CHEBI:61977"/>
        <dbReference type="ChEBI" id="CHEBI:83586"/>
        <dbReference type="EC" id="2.7.4.27"/>
    </reaction>
</comment>
<comment type="similarity">
    <text evidence="1">Belongs to the pyruvate, phosphate/water dikinase regulatory protein family. PDRP subfamily.</text>
</comment>
<evidence type="ECO:0000255" key="1">
    <source>
        <dbReference type="HAMAP-Rule" id="MF_00921"/>
    </source>
</evidence>
<feature type="chain" id="PRO_1000084470" description="Putative pyruvate, phosphate dikinase regulatory protein">
    <location>
        <begin position="1"/>
        <end position="273"/>
    </location>
</feature>
<feature type="binding site" evidence="1">
    <location>
        <begin position="149"/>
        <end position="156"/>
    </location>
    <ligand>
        <name>ADP</name>
        <dbReference type="ChEBI" id="CHEBI:456216"/>
    </ligand>
</feature>
<reference key="1">
    <citation type="journal article" date="2008" name="Infect. Immun.">
        <title>Genomic comparison of virulent Rickettsia rickettsii Sheila Smith and avirulent Rickettsia rickettsii Iowa.</title>
        <authorList>
            <person name="Ellison D.W."/>
            <person name="Clark T.R."/>
            <person name="Sturdevant D.E."/>
            <person name="Virtaneva K."/>
            <person name="Porcella S.F."/>
            <person name="Hackstadt T."/>
        </authorList>
    </citation>
    <scope>NUCLEOTIDE SEQUENCE [LARGE SCALE GENOMIC DNA]</scope>
    <source>
        <strain>Iowa</strain>
    </source>
</reference>